<gene>
    <name evidence="1" type="primary">mshC</name>
    <name type="ordered locus">Kfla_3804</name>
</gene>
<keyword id="KW-0067">ATP-binding</keyword>
<keyword id="KW-0436">Ligase</keyword>
<keyword id="KW-0479">Metal-binding</keyword>
<keyword id="KW-0547">Nucleotide-binding</keyword>
<keyword id="KW-1185">Reference proteome</keyword>
<keyword id="KW-0862">Zinc</keyword>
<proteinExistence type="inferred from homology"/>
<sequence>MQAWTKPDIPVVPGPARRLRLYDTASGGLVEVPPGPDGPARMYVCGITPYDATHMGHAATYVTFDLVNRLWRDAGYTVHYTQNITDVDDPLLERATATGVEWTDLAEREIQLFRDDMTALRVIPPQEYVGVVESIPLVVERIAELQQAGAVYDVDGDLYFAVKADPAFGGISSYDADTMRTLFGERGGDPDREGKRDPLDCLVWQQERPGEPAWDSPFGRGRPGWHIECSAIALQYLGMTIDVQGGGSDLIFPHHEMSASEAQCATGQHPFARAYVHQAMVGLDGEKMSKSKGNLVLVSRERQAGSDPMAIRLALLAHHYRTDWFWTDSELLDAQERLDVWRGAITRGTGPDGPAAVDALRAALTNDLDTTAALAAIDQWAETNGDDPEASALVALAVDALLGIKL</sequence>
<accession>D2PPT3</accession>
<name>MSHC_KRIFD</name>
<comment type="function">
    <text evidence="1">Catalyzes the ATP-dependent condensation of GlcN-Ins and L-cysteine to form L-Cys-GlcN-Ins.</text>
</comment>
<comment type="catalytic activity">
    <reaction evidence="1">
        <text>1D-myo-inositol 2-amino-2-deoxy-alpha-D-glucopyranoside + L-cysteine + ATP = 1D-myo-inositol 2-(L-cysteinylamino)-2-deoxy-alpha-D-glucopyranoside + AMP + diphosphate + H(+)</text>
        <dbReference type="Rhea" id="RHEA:26176"/>
        <dbReference type="ChEBI" id="CHEBI:15378"/>
        <dbReference type="ChEBI" id="CHEBI:30616"/>
        <dbReference type="ChEBI" id="CHEBI:33019"/>
        <dbReference type="ChEBI" id="CHEBI:35235"/>
        <dbReference type="ChEBI" id="CHEBI:58886"/>
        <dbReference type="ChEBI" id="CHEBI:58887"/>
        <dbReference type="ChEBI" id="CHEBI:456215"/>
        <dbReference type="EC" id="6.3.1.13"/>
    </reaction>
</comment>
<comment type="cofactor">
    <cofactor evidence="1">
        <name>Zn(2+)</name>
        <dbReference type="ChEBI" id="CHEBI:29105"/>
    </cofactor>
    <text evidence="1">Binds 1 zinc ion per subunit.</text>
</comment>
<comment type="subunit">
    <text evidence="1">Monomer.</text>
</comment>
<comment type="similarity">
    <text evidence="1">Belongs to the class-I aminoacyl-tRNA synthetase family. MshC subfamily.</text>
</comment>
<feature type="chain" id="PRO_0000400453" description="L-cysteine:1D-myo-inositol 2-amino-2-deoxy-alpha-D-glucopyranoside ligase">
    <location>
        <begin position="1"/>
        <end position="406"/>
    </location>
</feature>
<feature type="short sequence motif" description="'HIGH' region" evidence="1">
    <location>
        <begin position="47"/>
        <end position="57"/>
    </location>
</feature>
<feature type="short sequence motif" description="'ERGGDP' region" evidence="1">
    <location>
        <begin position="185"/>
        <end position="190"/>
    </location>
</feature>
<feature type="short sequence motif" description="'KMSKS' region" evidence="1">
    <location>
        <begin position="287"/>
        <end position="291"/>
    </location>
</feature>
<feature type="binding site" evidence="1">
    <location>
        <begin position="45"/>
        <end position="48"/>
    </location>
    <ligand>
        <name>L-cysteinyl-5'-AMP</name>
        <dbReference type="ChEBI" id="CHEBI:144924"/>
    </ligand>
</feature>
<feature type="binding site" evidence="1">
    <location>
        <position position="45"/>
    </location>
    <ligand>
        <name>Zn(2+)</name>
        <dbReference type="ChEBI" id="CHEBI:29105"/>
    </ligand>
</feature>
<feature type="binding site" evidence="1">
    <location>
        <position position="60"/>
    </location>
    <ligand>
        <name>L-cysteinyl-5'-AMP</name>
        <dbReference type="ChEBI" id="CHEBI:144924"/>
    </ligand>
</feature>
<feature type="binding site" evidence="1">
    <location>
        <begin position="83"/>
        <end position="85"/>
    </location>
    <ligand>
        <name>L-cysteinyl-5'-AMP</name>
        <dbReference type="ChEBI" id="CHEBI:144924"/>
    </ligand>
</feature>
<feature type="binding site" evidence="1">
    <location>
        <position position="225"/>
    </location>
    <ligand>
        <name>L-cysteinyl-5'-AMP</name>
        <dbReference type="ChEBI" id="CHEBI:144924"/>
    </ligand>
</feature>
<feature type="binding site" evidence="1">
    <location>
        <position position="229"/>
    </location>
    <ligand>
        <name>Zn(2+)</name>
        <dbReference type="ChEBI" id="CHEBI:29105"/>
    </ligand>
</feature>
<feature type="binding site" evidence="1">
    <location>
        <begin position="247"/>
        <end position="249"/>
    </location>
    <ligand>
        <name>L-cysteinyl-5'-AMP</name>
        <dbReference type="ChEBI" id="CHEBI:144924"/>
    </ligand>
</feature>
<feature type="binding site" evidence="1">
    <location>
        <position position="254"/>
    </location>
    <ligand>
        <name>Zn(2+)</name>
        <dbReference type="ChEBI" id="CHEBI:29105"/>
    </ligand>
</feature>
<feature type="binding site" evidence="1">
    <location>
        <position position="281"/>
    </location>
    <ligand>
        <name>L-cysteinyl-5'-AMP</name>
        <dbReference type="ChEBI" id="CHEBI:144924"/>
    </ligand>
</feature>
<dbReference type="EC" id="6.3.1.13" evidence="1"/>
<dbReference type="EMBL" id="CP001736">
    <property type="protein sequence ID" value="ADB32857.1"/>
    <property type="molecule type" value="Genomic_DNA"/>
</dbReference>
<dbReference type="RefSeq" id="WP_012921413.1">
    <property type="nucleotide sequence ID" value="NC_013729.1"/>
</dbReference>
<dbReference type="SMR" id="D2PPT3"/>
<dbReference type="STRING" id="479435.Kfla_3804"/>
<dbReference type="KEGG" id="kfl:Kfla_3804"/>
<dbReference type="eggNOG" id="COG0215">
    <property type="taxonomic scope" value="Bacteria"/>
</dbReference>
<dbReference type="HOGENOM" id="CLU_013528_0_0_11"/>
<dbReference type="OrthoDB" id="9815130at2"/>
<dbReference type="Proteomes" id="UP000007967">
    <property type="component" value="Chromosome"/>
</dbReference>
<dbReference type="GO" id="GO:0005829">
    <property type="term" value="C:cytosol"/>
    <property type="evidence" value="ECO:0007669"/>
    <property type="project" value="TreeGrafter"/>
</dbReference>
<dbReference type="GO" id="GO:0005524">
    <property type="term" value="F:ATP binding"/>
    <property type="evidence" value="ECO:0007669"/>
    <property type="project" value="UniProtKB-KW"/>
</dbReference>
<dbReference type="GO" id="GO:0035446">
    <property type="term" value="F:cysteine-glucosaminylinositol ligase activity"/>
    <property type="evidence" value="ECO:0007669"/>
    <property type="project" value="UniProtKB-UniRule"/>
</dbReference>
<dbReference type="GO" id="GO:0004817">
    <property type="term" value="F:cysteine-tRNA ligase activity"/>
    <property type="evidence" value="ECO:0007669"/>
    <property type="project" value="TreeGrafter"/>
</dbReference>
<dbReference type="GO" id="GO:0008270">
    <property type="term" value="F:zinc ion binding"/>
    <property type="evidence" value="ECO:0007669"/>
    <property type="project" value="UniProtKB-UniRule"/>
</dbReference>
<dbReference type="GO" id="GO:0006423">
    <property type="term" value="P:cysteinyl-tRNA aminoacylation"/>
    <property type="evidence" value="ECO:0007669"/>
    <property type="project" value="TreeGrafter"/>
</dbReference>
<dbReference type="GO" id="GO:0010125">
    <property type="term" value="P:mycothiol biosynthetic process"/>
    <property type="evidence" value="ECO:0007669"/>
    <property type="project" value="UniProtKB-UniRule"/>
</dbReference>
<dbReference type="CDD" id="cd00672">
    <property type="entry name" value="CysRS_core"/>
    <property type="match status" value="1"/>
</dbReference>
<dbReference type="FunFam" id="3.40.50.620:FF:000134">
    <property type="entry name" value="L-cysteine:1D-myo-inositol 2-amino-2-deoxy-alpha-D-glucopyranoside ligase"/>
    <property type="match status" value="1"/>
</dbReference>
<dbReference type="Gene3D" id="1.20.120.640">
    <property type="entry name" value="Anticodon-binding domain of a subclass of class I aminoacyl-tRNA synthetases"/>
    <property type="match status" value="1"/>
</dbReference>
<dbReference type="Gene3D" id="3.40.50.620">
    <property type="entry name" value="HUPs"/>
    <property type="match status" value="1"/>
</dbReference>
<dbReference type="HAMAP" id="MF_01697">
    <property type="entry name" value="MshC"/>
    <property type="match status" value="1"/>
</dbReference>
<dbReference type="InterPro" id="IPR024909">
    <property type="entry name" value="Cys-tRNA/MSH_ligase"/>
</dbReference>
<dbReference type="InterPro" id="IPR017812">
    <property type="entry name" value="Mycothiol_ligase_MshC"/>
</dbReference>
<dbReference type="InterPro" id="IPR014729">
    <property type="entry name" value="Rossmann-like_a/b/a_fold"/>
</dbReference>
<dbReference type="InterPro" id="IPR032678">
    <property type="entry name" value="tRNA-synt_1_cat_dom"/>
</dbReference>
<dbReference type="NCBIfam" id="TIGR03447">
    <property type="entry name" value="mycothiol_MshC"/>
    <property type="match status" value="1"/>
</dbReference>
<dbReference type="PANTHER" id="PTHR10890:SF3">
    <property type="entry name" value="CYSTEINE--TRNA LIGASE, CYTOPLASMIC"/>
    <property type="match status" value="1"/>
</dbReference>
<dbReference type="PANTHER" id="PTHR10890">
    <property type="entry name" value="CYSTEINYL-TRNA SYNTHETASE"/>
    <property type="match status" value="1"/>
</dbReference>
<dbReference type="Pfam" id="PF01406">
    <property type="entry name" value="tRNA-synt_1e"/>
    <property type="match status" value="1"/>
</dbReference>
<dbReference type="PRINTS" id="PR00983">
    <property type="entry name" value="TRNASYNTHCYS"/>
</dbReference>
<dbReference type="SUPFAM" id="SSF52374">
    <property type="entry name" value="Nucleotidylyl transferase"/>
    <property type="match status" value="1"/>
</dbReference>
<reference key="1">
    <citation type="submission" date="2009-09" db="EMBL/GenBank/DDBJ databases">
        <title>The complete genome of Kribbella flavida DSM 17836.</title>
        <authorList>
            <consortium name="US DOE Joint Genome Institute (JGI-PGF)"/>
            <person name="Lucas S."/>
            <person name="Copeland A."/>
            <person name="Lapidus A."/>
            <person name="Glavina del Rio T."/>
            <person name="Dalin E."/>
            <person name="Tice H."/>
            <person name="Bruce D."/>
            <person name="Goodwin L."/>
            <person name="Pitluck S."/>
            <person name="Kyrpides N."/>
            <person name="Mavromatis K."/>
            <person name="Ivanova N."/>
            <person name="Saunders E."/>
            <person name="Brettin T."/>
            <person name="Detter J.C."/>
            <person name="Han C."/>
            <person name="Larimer F."/>
            <person name="Land M."/>
            <person name="Hauser L."/>
            <person name="Markowitz V."/>
            <person name="Cheng J.-F."/>
            <person name="Hugenholtz P."/>
            <person name="Woyke T."/>
            <person name="Wu D."/>
            <person name="Pukall R."/>
            <person name="Klenk H.-P."/>
            <person name="Eisen J.A."/>
        </authorList>
    </citation>
    <scope>NUCLEOTIDE SEQUENCE [LARGE SCALE GENOMIC DNA]</scope>
    <source>
        <strain>DSM 17836 / JCM 10339 / NBRC 14399</strain>
    </source>
</reference>
<evidence type="ECO:0000255" key="1">
    <source>
        <dbReference type="HAMAP-Rule" id="MF_01697"/>
    </source>
</evidence>
<organism>
    <name type="scientific">Kribbella flavida (strain DSM 17836 / JCM 10339 / NBRC 14399)</name>
    <dbReference type="NCBI Taxonomy" id="479435"/>
    <lineage>
        <taxon>Bacteria</taxon>
        <taxon>Bacillati</taxon>
        <taxon>Actinomycetota</taxon>
        <taxon>Actinomycetes</taxon>
        <taxon>Propionibacteriales</taxon>
        <taxon>Kribbellaceae</taxon>
        <taxon>Kribbella</taxon>
    </lineage>
</organism>
<protein>
    <recommendedName>
        <fullName evidence="1">L-cysteine:1D-myo-inositol 2-amino-2-deoxy-alpha-D-glucopyranoside ligase</fullName>
        <shortName evidence="1">L-Cys:GlcN-Ins ligase</shortName>
        <ecNumber evidence="1">6.3.1.13</ecNumber>
    </recommendedName>
    <alternativeName>
        <fullName evidence="1">Mycothiol ligase</fullName>
        <shortName evidence="1">MSH ligase</shortName>
    </alternativeName>
</protein>